<name>MNS1_DANRE</name>
<protein>
    <recommendedName>
        <fullName>Meiosis-specific nuclear structural protein 1</fullName>
    </recommendedName>
</protein>
<evidence type="ECO:0000250" key="1">
    <source>
        <dbReference type="UniProtKB" id="Q2KIQ2"/>
    </source>
</evidence>
<evidence type="ECO:0000250" key="2">
    <source>
        <dbReference type="UniProtKB" id="Q61884"/>
    </source>
</evidence>
<evidence type="ECO:0000250" key="3">
    <source>
        <dbReference type="UniProtKB" id="Q8NEH6"/>
    </source>
</evidence>
<evidence type="ECO:0000255" key="4"/>
<evidence type="ECO:0000305" key="5"/>
<dbReference type="EMBL" id="BC059798">
    <property type="protein sequence ID" value="AAH59798.1"/>
    <property type="molecule type" value="mRNA"/>
</dbReference>
<dbReference type="RefSeq" id="NP_955465.1">
    <property type="nucleotide sequence ID" value="NM_199433.1"/>
</dbReference>
<dbReference type="SMR" id="Q6PBA8"/>
<dbReference type="FunCoup" id="Q6PBA8">
    <property type="interactions" value="134"/>
</dbReference>
<dbReference type="STRING" id="7955.ENSDARP00000109926"/>
<dbReference type="PaxDb" id="7955-ENSDARP00000109926"/>
<dbReference type="GeneID" id="573382"/>
<dbReference type="KEGG" id="dre:573382"/>
<dbReference type="AGR" id="ZFIN:ZDB-GENE-030521-42"/>
<dbReference type="CTD" id="55329"/>
<dbReference type="ZFIN" id="ZDB-GENE-030521-42">
    <property type="gene designation" value="mns1"/>
</dbReference>
<dbReference type="eggNOG" id="ENOG502QS9D">
    <property type="taxonomic scope" value="Eukaryota"/>
</dbReference>
<dbReference type="InParanoid" id="Q6PBA8"/>
<dbReference type="OrthoDB" id="197839at2759"/>
<dbReference type="PhylomeDB" id="Q6PBA8"/>
<dbReference type="PRO" id="PR:Q6PBA8"/>
<dbReference type="Proteomes" id="UP000000437">
    <property type="component" value="Alternate scaffold 7"/>
</dbReference>
<dbReference type="Proteomes" id="UP000000437">
    <property type="component" value="Chromosome 7"/>
</dbReference>
<dbReference type="GO" id="GO:0005879">
    <property type="term" value="C:axonemal microtubule"/>
    <property type="evidence" value="ECO:0000250"/>
    <property type="project" value="UniProtKB"/>
</dbReference>
<dbReference type="GO" id="GO:0005930">
    <property type="term" value="C:axoneme"/>
    <property type="evidence" value="ECO:0000250"/>
    <property type="project" value="UniProtKB"/>
</dbReference>
<dbReference type="GO" id="GO:0031514">
    <property type="term" value="C:motile cilium"/>
    <property type="evidence" value="ECO:0000314"/>
    <property type="project" value="ZFIN"/>
</dbReference>
<dbReference type="GO" id="GO:0005634">
    <property type="term" value="C:nucleus"/>
    <property type="evidence" value="ECO:0007669"/>
    <property type="project" value="UniProtKB-SubCell"/>
</dbReference>
<dbReference type="GO" id="GO:0044782">
    <property type="term" value="P:cilium organization"/>
    <property type="evidence" value="ECO:0000318"/>
    <property type="project" value="GO_Central"/>
</dbReference>
<dbReference type="GO" id="GO:0051321">
    <property type="term" value="P:meiotic cell cycle"/>
    <property type="evidence" value="ECO:0007669"/>
    <property type="project" value="UniProtKB-KW"/>
</dbReference>
<dbReference type="InterPro" id="IPR026504">
    <property type="entry name" value="MNS1"/>
</dbReference>
<dbReference type="InterPro" id="IPR043597">
    <property type="entry name" value="TPH_dom"/>
</dbReference>
<dbReference type="PANTHER" id="PTHR19265">
    <property type="entry name" value="MEIOSIS-SPECIFIC NUCLEAR STRUCTURAL PROTEIN 1"/>
    <property type="match status" value="1"/>
</dbReference>
<dbReference type="PANTHER" id="PTHR19265:SF0">
    <property type="entry name" value="MEIOSIS-SPECIFIC NUCLEAR STRUCTURAL PROTEIN 1"/>
    <property type="match status" value="1"/>
</dbReference>
<dbReference type="Pfam" id="PF13868">
    <property type="entry name" value="TPH"/>
    <property type="match status" value="1"/>
</dbReference>
<feature type="chain" id="PRO_0000298925" description="Meiosis-specific nuclear structural protein 1">
    <location>
        <begin position="1"/>
        <end position="486"/>
    </location>
</feature>
<feature type="coiled-coil region" evidence="4">
    <location>
        <begin position="52"/>
        <end position="198"/>
    </location>
</feature>
<feature type="coiled-coil region" evidence="4">
    <location>
        <begin position="230"/>
        <end position="440"/>
    </location>
</feature>
<comment type="function">
    <text evidence="2 3">Microtubule inner protein (MIP) part of the dynein-decorated doublet microtubules (DMTs) in cilia axoneme, which is required for motile cilia beating (By similarity). May play a role in the control of meiotic division and germ cell differentiation through regulation of pairing and recombination during meiosis (By similarity). Required for sperm flagella assembly (By similarity). May play a role in the assembly and function of the outer dynein arm-docking complex (ODA-DC). ODA-DC mediates outer dynein arms (ODA) binding onto the axonemal doublet microtubules (By similarity).</text>
</comment>
<comment type="subcellular location">
    <subcellularLocation>
        <location evidence="2">Nucleus</location>
    </subcellularLocation>
    <subcellularLocation>
        <location evidence="1">Cytoplasm</location>
        <location evidence="1">Cytoskeleton</location>
        <location evidence="1">Cilium axoneme</location>
    </subcellularLocation>
    <subcellularLocation>
        <location evidence="3">Cytoplasm</location>
        <location evidence="3">Cytoskeleton</location>
        <location evidence="3">Flagellum axoneme</location>
    </subcellularLocation>
    <text evidence="1">Microtubule inner protein (MIP) part of the dynein-decorated doublet microtubules (DMTs) in cilia axoneme.</text>
</comment>
<comment type="similarity">
    <text evidence="5">Belongs to the MNS1 family.</text>
</comment>
<reference key="1">
    <citation type="submission" date="2003-10" db="EMBL/GenBank/DDBJ databases">
        <authorList>
            <consortium name="NIH - Zebrafish Gene Collection (ZGC) project"/>
        </authorList>
    </citation>
    <scope>NUCLEOTIDE SEQUENCE [LARGE SCALE MRNA]</scope>
    <source>
        <tissue>Kidney</tissue>
    </source>
</reference>
<sequence length="486" mass="60446">MILEHRKQEERREDHSKRVVKERQLEANLSCEDRIERKRLLRKLQDEEYGKQIEESLLRAEEDKLFRERQLEQEERMAKELARINNEKLRDEKMRQYIKENSVELRELELKLKSAYLNRERAAQMAEKEAMRYETLREEAMIARTMRDEHELAEMEKEKLEQKKYEEVVRYQQELERQLEEKERKRQEAYEEFLKEKHMVDEIVRKIYMEDQMELQLQLDKMKATQRYIEDFKKQQAEWRRMEREKVEAENRRIIEFAQYQQRKEEDRMAKVREREQAKETLHKMLSEQIELEKQQREKMERAREELCLEEQAEAARQQEIEEMEKRIRQRLELQQTQQEMMAFKKLRLQEEKEEEEAFRQMMMAKFAEDDRIEQMNAQKRRMKQLEHKRAVEQLLEERRQQYLAEQEREEQERAVELEREAQRRKIIEEERQRLLKQHATKLLGYLPKGIFKEEDLEHFDEDFKSNFKQRQADIFSDEGWGDDSQ</sequence>
<proteinExistence type="evidence at transcript level"/>
<gene>
    <name type="primary">mns1</name>
    <name type="ORF">zgc:65845</name>
</gene>
<accession>Q6PBA8</accession>
<keyword id="KW-0966">Cell projection</keyword>
<keyword id="KW-0969">Cilium</keyword>
<keyword id="KW-0175">Coiled coil</keyword>
<keyword id="KW-0963">Cytoplasm</keyword>
<keyword id="KW-0206">Cytoskeleton</keyword>
<keyword id="KW-0282">Flagellum</keyword>
<keyword id="KW-0469">Meiosis</keyword>
<keyword id="KW-0539">Nucleus</keyword>
<keyword id="KW-1185">Reference proteome</keyword>
<organism>
    <name type="scientific">Danio rerio</name>
    <name type="common">Zebrafish</name>
    <name type="synonym">Brachydanio rerio</name>
    <dbReference type="NCBI Taxonomy" id="7955"/>
    <lineage>
        <taxon>Eukaryota</taxon>
        <taxon>Metazoa</taxon>
        <taxon>Chordata</taxon>
        <taxon>Craniata</taxon>
        <taxon>Vertebrata</taxon>
        <taxon>Euteleostomi</taxon>
        <taxon>Actinopterygii</taxon>
        <taxon>Neopterygii</taxon>
        <taxon>Teleostei</taxon>
        <taxon>Ostariophysi</taxon>
        <taxon>Cypriniformes</taxon>
        <taxon>Danionidae</taxon>
        <taxon>Danioninae</taxon>
        <taxon>Danio</taxon>
    </lineage>
</organism>